<keyword id="KW-0963">Cytoplasm</keyword>
<keyword id="KW-0489">Methyltransferase</keyword>
<keyword id="KW-0545">Nucleotide biosynthesis</keyword>
<keyword id="KW-1185">Reference proteome</keyword>
<keyword id="KW-0808">Transferase</keyword>
<gene>
    <name evidence="1" type="primary">thyA</name>
    <name type="ordered locus">HCH_05857</name>
</gene>
<feature type="chain" id="PRO_1000000608" description="Thymidylate synthase">
    <location>
        <begin position="1"/>
        <end position="264"/>
    </location>
</feature>
<feature type="active site" description="Nucleophile" evidence="1">
    <location>
        <position position="146"/>
    </location>
</feature>
<feature type="binding site" description="in other chain" evidence="1">
    <location>
        <position position="21"/>
    </location>
    <ligand>
        <name>dUMP</name>
        <dbReference type="ChEBI" id="CHEBI:246422"/>
        <note>ligand shared between dimeric partners</note>
    </ligand>
</feature>
<feature type="binding site" evidence="1">
    <location>
        <position position="51"/>
    </location>
    <ligand>
        <name>(6R)-5,10-methylene-5,6,7,8-tetrahydrofolate</name>
        <dbReference type="ChEBI" id="CHEBI:15636"/>
    </ligand>
</feature>
<feature type="binding site" evidence="1">
    <location>
        <begin position="126"/>
        <end position="127"/>
    </location>
    <ligand>
        <name>dUMP</name>
        <dbReference type="ChEBI" id="CHEBI:246422"/>
        <note>ligand shared between dimeric partners</note>
    </ligand>
</feature>
<feature type="binding site" description="in other chain" evidence="1">
    <location>
        <begin position="166"/>
        <end position="169"/>
    </location>
    <ligand>
        <name>dUMP</name>
        <dbReference type="ChEBI" id="CHEBI:246422"/>
        <note>ligand shared between dimeric partners</note>
    </ligand>
</feature>
<feature type="binding site" evidence="1">
    <location>
        <position position="169"/>
    </location>
    <ligand>
        <name>(6R)-5,10-methylene-5,6,7,8-tetrahydrofolate</name>
        <dbReference type="ChEBI" id="CHEBI:15636"/>
    </ligand>
</feature>
<feature type="binding site" description="in other chain" evidence="1">
    <location>
        <position position="177"/>
    </location>
    <ligand>
        <name>dUMP</name>
        <dbReference type="ChEBI" id="CHEBI:246422"/>
        <note>ligand shared between dimeric partners</note>
    </ligand>
</feature>
<feature type="binding site" description="in other chain" evidence="1">
    <location>
        <begin position="207"/>
        <end position="209"/>
    </location>
    <ligand>
        <name>dUMP</name>
        <dbReference type="ChEBI" id="CHEBI:246422"/>
        <note>ligand shared between dimeric partners</note>
    </ligand>
</feature>
<feature type="binding site" evidence="1">
    <location>
        <position position="263"/>
    </location>
    <ligand>
        <name>(6R)-5,10-methylene-5,6,7,8-tetrahydrofolate</name>
        <dbReference type="ChEBI" id="CHEBI:15636"/>
    </ligand>
</feature>
<sequence length="264" mass="30587">MKQYLDMMRHVREQGAVKTDRTGTGTRSVFGYQMRFDLQQGFPLVTTKKLHLRSIIYELLWFLNGDTNIKYLKDNGVSIWDEWADESGDLGPVYGYQWRSWPAPNGEHIDQISNVLAQIKRNPDSRRHMVVAYNPAFVDQMALPPCHAMFQFYVAEGRLSCQLYQRSADIFLGVPFNIASYALLTHMFAQQCDLDVGDFIWTGGDVHLYNNHLDQAKEQLDREPRPLPQLQIRRKPASLFDYEFEDFEITGYDPHPHIKAPVAV</sequence>
<comment type="function">
    <text evidence="1">Catalyzes the reductive methylation of 2'-deoxyuridine-5'-monophosphate (dUMP) to 2'-deoxythymidine-5'-monophosphate (dTMP) while utilizing 5,10-methylenetetrahydrofolate (mTHF) as the methyl donor and reductant in the reaction, yielding dihydrofolate (DHF) as a by-product. This enzymatic reaction provides an intracellular de novo source of dTMP, an essential precursor for DNA biosynthesis.</text>
</comment>
<comment type="catalytic activity">
    <reaction evidence="1">
        <text>dUMP + (6R)-5,10-methylene-5,6,7,8-tetrahydrofolate = 7,8-dihydrofolate + dTMP</text>
        <dbReference type="Rhea" id="RHEA:12104"/>
        <dbReference type="ChEBI" id="CHEBI:15636"/>
        <dbReference type="ChEBI" id="CHEBI:57451"/>
        <dbReference type="ChEBI" id="CHEBI:63528"/>
        <dbReference type="ChEBI" id="CHEBI:246422"/>
        <dbReference type="EC" id="2.1.1.45"/>
    </reaction>
</comment>
<comment type="pathway">
    <text evidence="1">Pyrimidine metabolism; dTTP biosynthesis.</text>
</comment>
<comment type="subunit">
    <text evidence="1">Homodimer.</text>
</comment>
<comment type="subcellular location">
    <subcellularLocation>
        <location evidence="1">Cytoplasm</location>
    </subcellularLocation>
</comment>
<comment type="similarity">
    <text evidence="1">Belongs to the thymidylate synthase family. Bacterial-type ThyA subfamily.</text>
</comment>
<protein>
    <recommendedName>
        <fullName evidence="1">Thymidylate synthase</fullName>
        <shortName evidence="1">TS</shortName>
        <shortName evidence="1">TSase</shortName>
        <ecNumber evidence="1">2.1.1.45</ecNumber>
    </recommendedName>
</protein>
<proteinExistence type="inferred from homology"/>
<organism>
    <name type="scientific">Hahella chejuensis (strain KCTC 2396)</name>
    <dbReference type="NCBI Taxonomy" id="349521"/>
    <lineage>
        <taxon>Bacteria</taxon>
        <taxon>Pseudomonadati</taxon>
        <taxon>Pseudomonadota</taxon>
        <taxon>Gammaproteobacteria</taxon>
        <taxon>Oceanospirillales</taxon>
        <taxon>Hahellaceae</taxon>
        <taxon>Hahella</taxon>
    </lineage>
</organism>
<accession>Q2SA17</accession>
<evidence type="ECO:0000255" key="1">
    <source>
        <dbReference type="HAMAP-Rule" id="MF_00008"/>
    </source>
</evidence>
<dbReference type="EC" id="2.1.1.45" evidence="1"/>
<dbReference type="EMBL" id="CP000155">
    <property type="protein sequence ID" value="ABC32507.1"/>
    <property type="molecule type" value="Genomic_DNA"/>
</dbReference>
<dbReference type="RefSeq" id="WP_011399566.1">
    <property type="nucleotide sequence ID" value="NC_007645.1"/>
</dbReference>
<dbReference type="SMR" id="Q2SA17"/>
<dbReference type="STRING" id="349521.HCH_05857"/>
<dbReference type="KEGG" id="hch:HCH_05857"/>
<dbReference type="eggNOG" id="COG0207">
    <property type="taxonomic scope" value="Bacteria"/>
</dbReference>
<dbReference type="HOGENOM" id="CLU_021669_0_0_6"/>
<dbReference type="OrthoDB" id="9774633at2"/>
<dbReference type="UniPathway" id="UPA00575"/>
<dbReference type="Proteomes" id="UP000000238">
    <property type="component" value="Chromosome"/>
</dbReference>
<dbReference type="GO" id="GO:0005829">
    <property type="term" value="C:cytosol"/>
    <property type="evidence" value="ECO:0007669"/>
    <property type="project" value="TreeGrafter"/>
</dbReference>
<dbReference type="GO" id="GO:0004799">
    <property type="term" value="F:thymidylate synthase activity"/>
    <property type="evidence" value="ECO:0007669"/>
    <property type="project" value="UniProtKB-UniRule"/>
</dbReference>
<dbReference type="GO" id="GO:0006231">
    <property type="term" value="P:dTMP biosynthetic process"/>
    <property type="evidence" value="ECO:0007669"/>
    <property type="project" value="UniProtKB-UniRule"/>
</dbReference>
<dbReference type="GO" id="GO:0006235">
    <property type="term" value="P:dTTP biosynthetic process"/>
    <property type="evidence" value="ECO:0007669"/>
    <property type="project" value="UniProtKB-UniRule"/>
</dbReference>
<dbReference type="GO" id="GO:0032259">
    <property type="term" value="P:methylation"/>
    <property type="evidence" value="ECO:0007669"/>
    <property type="project" value="UniProtKB-KW"/>
</dbReference>
<dbReference type="CDD" id="cd00351">
    <property type="entry name" value="TS_Pyrimidine_HMase"/>
    <property type="match status" value="1"/>
</dbReference>
<dbReference type="FunFam" id="3.30.572.10:FF:000001">
    <property type="entry name" value="Thymidylate synthase"/>
    <property type="match status" value="1"/>
</dbReference>
<dbReference type="Gene3D" id="3.30.572.10">
    <property type="entry name" value="Thymidylate synthase/dCMP hydroxymethylase domain"/>
    <property type="match status" value="1"/>
</dbReference>
<dbReference type="HAMAP" id="MF_00008">
    <property type="entry name" value="Thymidy_synth_bact"/>
    <property type="match status" value="1"/>
</dbReference>
<dbReference type="InterPro" id="IPR045097">
    <property type="entry name" value="Thymidate_synth/dCMP_Mease"/>
</dbReference>
<dbReference type="InterPro" id="IPR023451">
    <property type="entry name" value="Thymidate_synth/dCMP_Mease_dom"/>
</dbReference>
<dbReference type="InterPro" id="IPR036926">
    <property type="entry name" value="Thymidate_synth/dCMP_Mease_sf"/>
</dbReference>
<dbReference type="InterPro" id="IPR000398">
    <property type="entry name" value="Thymidylate_synthase"/>
</dbReference>
<dbReference type="InterPro" id="IPR020940">
    <property type="entry name" value="Thymidylate_synthase_AS"/>
</dbReference>
<dbReference type="NCBIfam" id="NF002497">
    <property type="entry name" value="PRK01827.1-3"/>
    <property type="match status" value="1"/>
</dbReference>
<dbReference type="NCBIfam" id="NF002499">
    <property type="entry name" value="PRK01827.1-5"/>
    <property type="match status" value="1"/>
</dbReference>
<dbReference type="NCBIfam" id="TIGR03284">
    <property type="entry name" value="thym_sym"/>
    <property type="match status" value="2"/>
</dbReference>
<dbReference type="PANTHER" id="PTHR11548:SF9">
    <property type="entry name" value="THYMIDYLATE SYNTHASE"/>
    <property type="match status" value="1"/>
</dbReference>
<dbReference type="PANTHER" id="PTHR11548">
    <property type="entry name" value="THYMIDYLATE SYNTHASE 1"/>
    <property type="match status" value="1"/>
</dbReference>
<dbReference type="Pfam" id="PF00303">
    <property type="entry name" value="Thymidylat_synt"/>
    <property type="match status" value="1"/>
</dbReference>
<dbReference type="PRINTS" id="PR00108">
    <property type="entry name" value="THYMDSNTHASE"/>
</dbReference>
<dbReference type="SUPFAM" id="SSF55831">
    <property type="entry name" value="Thymidylate synthase/dCMP hydroxymethylase"/>
    <property type="match status" value="1"/>
</dbReference>
<dbReference type="PROSITE" id="PS00091">
    <property type="entry name" value="THYMIDYLATE_SYNTHASE"/>
    <property type="match status" value="1"/>
</dbReference>
<reference key="1">
    <citation type="journal article" date="2005" name="Nucleic Acids Res.">
        <title>Genomic blueprint of Hahella chejuensis, a marine microbe producing an algicidal agent.</title>
        <authorList>
            <person name="Jeong H."/>
            <person name="Yim J.H."/>
            <person name="Lee C."/>
            <person name="Choi S.-H."/>
            <person name="Park Y.K."/>
            <person name="Yoon S.H."/>
            <person name="Hur C.-G."/>
            <person name="Kang H.-Y."/>
            <person name="Kim D."/>
            <person name="Lee H.H."/>
            <person name="Park K.H."/>
            <person name="Park S.-H."/>
            <person name="Park H.-S."/>
            <person name="Lee H.K."/>
            <person name="Oh T.K."/>
            <person name="Kim J.F."/>
        </authorList>
    </citation>
    <scope>NUCLEOTIDE SEQUENCE [LARGE SCALE GENOMIC DNA]</scope>
    <source>
        <strain>KCTC 2396</strain>
    </source>
</reference>
<name>TYSY_HAHCH</name>